<sequence>MAEFEERPRLSIGEEEAPPYPLEKLTGGRRTRAQIHALHQQAGRVPPQAVELEQAVLGAMLIEPEAIPRALEILTPEAFYDGRHQRIFRAIVRLFEQNRGVDLLTVTEELRRTGELEQAGDTIYLSELTTRVASAANVEYHARIIAEKLLRRMIEVMTLLVGRAYDPAADAFELLDEVEAEIFRLSDVHLRKAARSMNEVVKETLERLEAIHGRPGGITGVPSGFHQLDALTGGWQRGDLIIIAARPSMGKTAFALSCRNAALHPHYGTGVAIFSLEMGAEQLAQRLLTAEAASMPRRPAPDGCATRTGVSWPARRPLSDAPIFIDDTPSLGVLELRAKCRRLKAEHDIGLVIVDYLQLMQASHMPRNANREQEIAQISRSLKALAKELNVPVVALSQLSRAVETRGGDKRPQLSDLRESGCLAGDTLITLADGRRVPIRELVSQQNFSVWALNPQTYRLERARVSRAFCTGIKPVYRLTTRLGRSIRATANHRFLTPQGWKRVDELQPGDYLALPRRIPTASTPTLTEAELALLGHLIGDGCTLPHHVIQYTSRDADLATLVAHLATKVFGSKVTPQIRKELRWYQVYLRAARPLAPGKRNPISDWLRDLGIFGLRSYEKKVPALLFCQTSEAIATFLRHLWATDGCIQMRRGKKPYPAVYYATSSYQLARDVQSLLLRLGINARLKTVAQGEKGRVQYHVKVSGREDLLRFVEKIGAVGARQRAALASVYDYLSVRTGNPNRDIIPVALWYELVREAMYQRGISHRQLHANLGMAYGGMTLFRQNLSRARALRLAEAAACPELRQLAQSDVYWDPIVSIEPDGVEEVFDLTVPGPHNFVANDIIAHNSIEQDADVVLFIYRPERYGITVDENGNPTEGIAEIIIGKQRNGPTGTVRLAFINQYARFENLTMYQPEPGTPLPETPDETILPSGPPDEAPF</sequence>
<proteinExistence type="inferred from homology"/>
<name>DNAB_RHOMR</name>
<reference key="1">
    <citation type="journal article" date="1997" name="Proc. Natl. Acad. Sci. U.S.A.">
        <title>A DnaB intein in Rhodothermus marinus: indication of recent intein homing across remotely related organisms.</title>
        <authorList>
            <person name="Liu X.Q."/>
            <person name="Hu Z."/>
        </authorList>
    </citation>
    <scope>NUCLEOTIDE SEQUENCE [GENOMIC DNA]</scope>
    <scope>INTEIN SPLICING IN E.COLI</scope>
    <source>
        <strain>ATCC 43812 / R-10 / DSM 4252</strain>
    </source>
</reference>
<reference key="2">
    <citation type="submission" date="1997-06" db="EMBL/GenBank/DDBJ databases">
        <title>Cloning of a dnaB homolog gene from Rhodothermus marinus with high similarity to the E.coli helicase but not able to complement a dnaBts mutation.</title>
        <authorList>
            <person name="Politz O."/>
        </authorList>
    </citation>
    <scope>NUCLEOTIDE SEQUENCE [GENOMIC DNA]</scope>
</reference>
<reference key="3">
    <citation type="journal article" date="2003" name="Nucleic Acids Res.">
        <title>A nomenclature for restriction enzymes, DNA methyltransferases, homing endonucleases and their genes.</title>
        <authorList>
            <person name="Roberts R.J."/>
            <person name="Belfort M."/>
            <person name="Bestor T."/>
            <person name="Bhagwat A.S."/>
            <person name="Bickle T.A."/>
            <person name="Bitinaite J."/>
            <person name="Blumenthal R.M."/>
            <person name="Degtyarev S.K."/>
            <person name="Dryden D.T."/>
            <person name="Dybvig K."/>
            <person name="Firman K."/>
            <person name="Gromova E.S."/>
            <person name="Gumport R.I."/>
            <person name="Halford S.E."/>
            <person name="Hattman S."/>
            <person name="Heitman J."/>
            <person name="Hornby D.P."/>
            <person name="Janulaitis A."/>
            <person name="Jeltsch A."/>
            <person name="Josephsen J."/>
            <person name="Kiss A."/>
            <person name="Klaenhammer T.R."/>
            <person name="Kobayashi I."/>
            <person name="Kong H."/>
            <person name="Krueger D.H."/>
            <person name="Lacks S."/>
            <person name="Marinus M.G."/>
            <person name="Miyahara M."/>
            <person name="Morgan R.D."/>
            <person name="Murray N.E."/>
            <person name="Nagaraja V."/>
            <person name="Piekarowicz A."/>
            <person name="Pingoud A."/>
            <person name="Raleigh E."/>
            <person name="Rao D.N."/>
            <person name="Reich N."/>
            <person name="Repin V.E."/>
            <person name="Selker E.U."/>
            <person name="Shaw P.C."/>
            <person name="Stein D.C."/>
            <person name="Stoddard B.L."/>
            <person name="Szybalski W."/>
            <person name="Trautner T.A."/>
            <person name="Van Etten J.L."/>
            <person name="Vitor J.M."/>
            <person name="Wilson G.G."/>
            <person name="Xu S.Y."/>
        </authorList>
    </citation>
    <scope>NOMENCLATURE</scope>
</reference>
<comment type="function">
    <text evidence="1">The main replicative DNA helicase, it participates in initiation and elongation during chromosome replication. Travels ahead of the DNA replisome, separating dsDNA into templates for DNA synthesis. A processive ATP-dependent 5'-3' DNA helicase it has DNA-dependent ATPase activity.</text>
</comment>
<comment type="function">
    <text evidence="6">The intein is an endonuclease.</text>
</comment>
<comment type="catalytic activity">
    <reaction evidence="1">
        <text>Couples ATP hydrolysis with the unwinding of duplex DNA at the replication fork by translocating in the 5'-3' direction. This creates two antiparallel DNA single strands (ssDNA). The leading ssDNA polymer is the template for DNA polymerase III holoenzyme which synthesizes a continuous strand.</text>
        <dbReference type="EC" id="5.6.2.3"/>
    </reaction>
</comment>
<comment type="catalytic activity">
    <reaction evidence="1">
        <text>ATP + H2O = ADP + phosphate + H(+)</text>
        <dbReference type="Rhea" id="RHEA:13065"/>
        <dbReference type="ChEBI" id="CHEBI:15377"/>
        <dbReference type="ChEBI" id="CHEBI:15378"/>
        <dbReference type="ChEBI" id="CHEBI:30616"/>
        <dbReference type="ChEBI" id="CHEBI:43474"/>
        <dbReference type="ChEBI" id="CHEBI:456216"/>
        <dbReference type="EC" id="5.6.2.3"/>
    </reaction>
</comment>
<comment type="subunit">
    <text evidence="1">Homohexamer.</text>
</comment>
<comment type="PTM">
    <text evidence="6">Upon expression in E.coli this protein undergoes self splicing that involves a post-translational excision of the intervening region (intein) followed by peptide ligation.</text>
</comment>
<comment type="similarity">
    <text evidence="9">Belongs to the helicase family. DnaB subfamily.</text>
</comment>
<organism>
    <name type="scientific">Rhodothermus marinus</name>
    <name type="common">Rhodothermus obamensis</name>
    <dbReference type="NCBI Taxonomy" id="29549"/>
    <lineage>
        <taxon>Bacteria</taxon>
        <taxon>Pseudomonadati</taxon>
        <taxon>Rhodothermota</taxon>
        <taxon>Rhodothermia</taxon>
        <taxon>Rhodothermales</taxon>
        <taxon>Rhodothermaceae</taxon>
        <taxon>Rhodothermus</taxon>
    </lineage>
</organism>
<dbReference type="EC" id="5.6.2.3" evidence="1"/>
<dbReference type="EC" id="3.1.-.-" evidence="6"/>
<dbReference type="EMBL" id="AF006675">
    <property type="protein sequence ID" value="AAB66912.1"/>
    <property type="molecule type" value="Genomic_DNA"/>
</dbReference>
<dbReference type="EMBL" id="Y13813">
    <property type="protein sequence ID" value="CAA74140.1"/>
    <property type="molecule type" value="Genomic_DNA"/>
</dbReference>
<dbReference type="SMR" id="O30477"/>
<dbReference type="MEROPS" id="N10.002"/>
<dbReference type="REBASE" id="4095">
    <property type="entry name" value="PI-Rma43812IP"/>
</dbReference>
<dbReference type="GO" id="GO:0005829">
    <property type="term" value="C:cytosol"/>
    <property type="evidence" value="ECO:0007669"/>
    <property type="project" value="TreeGrafter"/>
</dbReference>
<dbReference type="GO" id="GO:1990077">
    <property type="term" value="C:primosome complex"/>
    <property type="evidence" value="ECO:0007669"/>
    <property type="project" value="UniProtKB-KW"/>
</dbReference>
<dbReference type="GO" id="GO:0005524">
    <property type="term" value="F:ATP binding"/>
    <property type="evidence" value="ECO:0007669"/>
    <property type="project" value="UniProtKB-KW"/>
</dbReference>
<dbReference type="GO" id="GO:0016887">
    <property type="term" value="F:ATP hydrolysis activity"/>
    <property type="evidence" value="ECO:0007669"/>
    <property type="project" value="RHEA"/>
</dbReference>
<dbReference type="GO" id="GO:0003677">
    <property type="term" value="F:DNA binding"/>
    <property type="evidence" value="ECO:0007669"/>
    <property type="project" value="UniProtKB-KW"/>
</dbReference>
<dbReference type="GO" id="GO:0003678">
    <property type="term" value="F:DNA helicase activity"/>
    <property type="evidence" value="ECO:0007669"/>
    <property type="project" value="InterPro"/>
</dbReference>
<dbReference type="GO" id="GO:0004519">
    <property type="term" value="F:endonuclease activity"/>
    <property type="evidence" value="ECO:0007669"/>
    <property type="project" value="UniProtKB-KW"/>
</dbReference>
<dbReference type="GO" id="GO:0006269">
    <property type="term" value="P:DNA replication, synthesis of primer"/>
    <property type="evidence" value="ECO:0007669"/>
    <property type="project" value="UniProtKB-KW"/>
</dbReference>
<dbReference type="GO" id="GO:0016539">
    <property type="term" value="P:intein-mediated protein splicing"/>
    <property type="evidence" value="ECO:0007669"/>
    <property type="project" value="InterPro"/>
</dbReference>
<dbReference type="GO" id="GO:0006314">
    <property type="term" value="P:intron homing"/>
    <property type="evidence" value="ECO:0007669"/>
    <property type="project" value="UniProtKB-KW"/>
</dbReference>
<dbReference type="CDD" id="cd00984">
    <property type="entry name" value="DnaB_C"/>
    <property type="match status" value="1"/>
</dbReference>
<dbReference type="CDD" id="cd00081">
    <property type="entry name" value="Hint"/>
    <property type="match status" value="2"/>
</dbReference>
<dbReference type="FunFam" id="1.10.860.10:FF:000001">
    <property type="entry name" value="Replicative DNA helicase"/>
    <property type="match status" value="1"/>
</dbReference>
<dbReference type="Gene3D" id="1.10.860.10">
    <property type="entry name" value="DNAb Helicase, Chain A"/>
    <property type="match status" value="1"/>
</dbReference>
<dbReference type="Gene3D" id="2.170.16.10">
    <property type="entry name" value="Hedgehog/Intein (Hint) domain"/>
    <property type="match status" value="2"/>
</dbReference>
<dbReference type="Gene3D" id="3.10.28.10">
    <property type="entry name" value="Homing endonucleases"/>
    <property type="match status" value="1"/>
</dbReference>
<dbReference type="Gene3D" id="3.40.50.300">
    <property type="entry name" value="P-loop containing nucleotide triphosphate hydrolases"/>
    <property type="match status" value="1"/>
</dbReference>
<dbReference type="InterPro" id="IPR036185">
    <property type="entry name" value="DNA_heli_DnaB-like_N_sf"/>
</dbReference>
<dbReference type="InterPro" id="IPR007692">
    <property type="entry name" value="DNA_helicase_DnaB"/>
</dbReference>
<dbReference type="InterPro" id="IPR007694">
    <property type="entry name" value="DNA_helicase_DnaB-like_C"/>
</dbReference>
<dbReference type="InterPro" id="IPR007693">
    <property type="entry name" value="DNA_helicase_DnaB-like_N"/>
</dbReference>
<dbReference type="InterPro" id="IPR016136">
    <property type="entry name" value="DNA_helicase_N/primase_C"/>
</dbReference>
<dbReference type="InterPro" id="IPR003586">
    <property type="entry name" value="Hint_dom_C"/>
</dbReference>
<dbReference type="InterPro" id="IPR003587">
    <property type="entry name" value="Hint_dom_N"/>
</dbReference>
<dbReference type="InterPro" id="IPR036844">
    <property type="entry name" value="Hint_dom_sf"/>
</dbReference>
<dbReference type="InterPro" id="IPR027434">
    <property type="entry name" value="Homing_endonucl"/>
</dbReference>
<dbReference type="InterPro" id="IPR006142">
    <property type="entry name" value="INTEIN"/>
</dbReference>
<dbReference type="InterPro" id="IPR030934">
    <property type="entry name" value="Intein_C"/>
</dbReference>
<dbReference type="InterPro" id="IPR004042">
    <property type="entry name" value="Intein_endonuc_central"/>
</dbReference>
<dbReference type="InterPro" id="IPR006141">
    <property type="entry name" value="Intein_N"/>
</dbReference>
<dbReference type="InterPro" id="IPR004860">
    <property type="entry name" value="LAGLIDADG_dom"/>
</dbReference>
<dbReference type="InterPro" id="IPR027417">
    <property type="entry name" value="P-loop_NTPase"/>
</dbReference>
<dbReference type="NCBIfam" id="TIGR00665">
    <property type="entry name" value="DnaB"/>
    <property type="match status" value="1"/>
</dbReference>
<dbReference type="NCBIfam" id="TIGR01443">
    <property type="entry name" value="intein_Cterm"/>
    <property type="match status" value="1"/>
</dbReference>
<dbReference type="NCBIfam" id="TIGR01445">
    <property type="entry name" value="intein_Nterm"/>
    <property type="match status" value="1"/>
</dbReference>
<dbReference type="NCBIfam" id="NF005852">
    <property type="entry name" value="PRK07773.1"/>
    <property type="match status" value="1"/>
</dbReference>
<dbReference type="PANTHER" id="PTHR30153:SF2">
    <property type="entry name" value="REPLICATIVE DNA HELICASE"/>
    <property type="match status" value="1"/>
</dbReference>
<dbReference type="PANTHER" id="PTHR30153">
    <property type="entry name" value="REPLICATIVE DNA HELICASE DNAB"/>
    <property type="match status" value="1"/>
</dbReference>
<dbReference type="Pfam" id="PF00772">
    <property type="entry name" value="DnaB"/>
    <property type="match status" value="1"/>
</dbReference>
<dbReference type="Pfam" id="PF03796">
    <property type="entry name" value="DnaB_C"/>
    <property type="match status" value="2"/>
</dbReference>
<dbReference type="Pfam" id="PF14890">
    <property type="entry name" value="Intein_splicing"/>
    <property type="match status" value="1"/>
</dbReference>
<dbReference type="Pfam" id="PF14528">
    <property type="entry name" value="LAGLIDADG_3"/>
    <property type="match status" value="1"/>
</dbReference>
<dbReference type="PRINTS" id="PR00379">
    <property type="entry name" value="INTEIN"/>
</dbReference>
<dbReference type="SMART" id="SM00305">
    <property type="entry name" value="HintC"/>
    <property type="match status" value="1"/>
</dbReference>
<dbReference type="SMART" id="SM00306">
    <property type="entry name" value="HintN"/>
    <property type="match status" value="1"/>
</dbReference>
<dbReference type="SUPFAM" id="SSF51294">
    <property type="entry name" value="Hedgehog/intein (Hint) domain"/>
    <property type="match status" value="1"/>
</dbReference>
<dbReference type="SUPFAM" id="SSF55608">
    <property type="entry name" value="Homing endonucleases"/>
    <property type="match status" value="1"/>
</dbReference>
<dbReference type="SUPFAM" id="SSF48024">
    <property type="entry name" value="N-terminal domain of DnaB helicase"/>
    <property type="match status" value="1"/>
</dbReference>
<dbReference type="SUPFAM" id="SSF52540">
    <property type="entry name" value="P-loop containing nucleoside triphosphate hydrolases"/>
    <property type="match status" value="1"/>
</dbReference>
<dbReference type="PROSITE" id="PS50818">
    <property type="entry name" value="INTEIN_C_TER"/>
    <property type="match status" value="1"/>
</dbReference>
<dbReference type="PROSITE" id="PS50819">
    <property type="entry name" value="INTEIN_ENDONUCLEASE"/>
    <property type="match status" value="1"/>
</dbReference>
<dbReference type="PROSITE" id="PS50817">
    <property type="entry name" value="INTEIN_N_TER"/>
    <property type="match status" value="1"/>
</dbReference>
<dbReference type="PROSITE" id="PS51199">
    <property type="entry name" value="SF4_HELICASE"/>
    <property type="match status" value="2"/>
</dbReference>
<feature type="chain" id="PRO_0000013285" description="Replicative DNA helicase DnaB, 1st part" evidence="2">
    <location>
        <begin position="1"/>
        <end position="421"/>
    </location>
</feature>
<feature type="chain" id="PRO_0000013286" description="Homing endonuclease PI-Rma43812IP" evidence="2">
    <location>
        <begin position="422"/>
        <end position="849"/>
    </location>
</feature>
<feature type="chain" id="PRO_0000013287" description="Replicative DNA helicase DnaB, 2nd part" evidence="2">
    <location>
        <begin position="850"/>
        <end position="941"/>
    </location>
</feature>
<feature type="domain" description="SF4 helicase; first part" evidence="4">
    <location>
        <begin position="214"/>
        <end position="484"/>
    </location>
</feature>
<feature type="domain" description="DOD-type homing endonuclease" evidence="3">
    <location>
        <begin position="534"/>
        <end position="683"/>
    </location>
</feature>
<feature type="domain" description="SF4 helicase; second part" evidence="4">
    <location>
        <begin position="646"/>
        <end position="915"/>
    </location>
</feature>
<feature type="region of interest" description="Disordered" evidence="5">
    <location>
        <begin position="1"/>
        <end position="25"/>
    </location>
</feature>
<feature type="region of interest" description="Disordered" evidence="5">
    <location>
        <begin position="914"/>
        <end position="941"/>
    </location>
</feature>
<feature type="binding site" evidence="4">
    <location>
        <begin position="245"/>
        <end position="252"/>
    </location>
    <ligand>
        <name>ATP</name>
        <dbReference type="ChEBI" id="CHEBI:30616"/>
    </ligand>
</feature>
<feature type="sequence conflict" description="In Ref. 2; CAA74140." evidence="9" ref="2">
    <original>R</original>
    <variation>RR</variation>
    <location>
        <position position="30"/>
    </location>
</feature>
<feature type="sequence conflict" description="In Ref. 2; CAA74140." evidence="9" ref="2">
    <original>K</original>
    <variation>KA</variation>
    <location>
        <position position="148"/>
    </location>
</feature>
<feature type="sequence conflict" description="In Ref. 2; CAA74140." evidence="9" ref="2">
    <original>C</original>
    <variation>CA</variation>
    <location>
        <position position="258"/>
    </location>
</feature>
<feature type="sequence conflict" description="In Ref. 2; CAA74140." evidence="9" ref="2">
    <original>ASMPRRPAPDGCATRTGVSWPARRP</original>
    <variation>RVDAQAARTGRLRDEDWRKLARAAGR</variation>
    <location>
        <begin position="293"/>
        <end position="317"/>
    </location>
</feature>
<keyword id="KW-0067">ATP-binding</keyword>
<keyword id="KW-0068">Autocatalytic cleavage</keyword>
<keyword id="KW-0235">DNA replication</keyword>
<keyword id="KW-0238">DNA-binding</keyword>
<keyword id="KW-0255">Endonuclease</keyword>
<keyword id="KW-0347">Helicase</keyword>
<keyword id="KW-0378">Hydrolase</keyword>
<keyword id="KW-0404">Intron homing</keyword>
<keyword id="KW-0413">Isomerase</keyword>
<keyword id="KW-0540">Nuclease</keyword>
<keyword id="KW-0547">Nucleotide-binding</keyword>
<keyword id="KW-0639">Primosome</keyword>
<keyword id="KW-0651">Protein splicing</keyword>
<keyword id="KW-0677">Repeat</keyword>
<protein>
    <recommendedName>
        <fullName>Replicative DNA helicase DnaB</fullName>
        <ecNumber evidence="1">5.6.2.3</ecNumber>
    </recommendedName>
    <alternativeName>
        <fullName evidence="9">DNA 5'-3' helicase DnaB</fullName>
    </alternativeName>
    <component>
        <recommendedName>
            <fullName evidence="7">Homing endonuclease PI-Rma43812IP</fullName>
            <ecNumber evidence="6">3.1.-.-</ecNumber>
        </recommendedName>
        <alternativeName>
            <fullName evidence="8">Rma DnaB intein</fullName>
        </alternativeName>
    </component>
</protein>
<gene>
    <name evidence="8" type="primary">dnaB</name>
</gene>
<accession>O30477</accession>
<accession>O50478</accession>
<evidence type="ECO:0000250" key="1">
    <source>
        <dbReference type="UniProtKB" id="P0ACB0"/>
    </source>
</evidence>
<evidence type="ECO:0000255" key="2"/>
<evidence type="ECO:0000255" key="3">
    <source>
        <dbReference type="PROSITE-ProRule" id="PRU00273"/>
    </source>
</evidence>
<evidence type="ECO:0000255" key="4">
    <source>
        <dbReference type="PROSITE-ProRule" id="PRU00596"/>
    </source>
</evidence>
<evidence type="ECO:0000256" key="5">
    <source>
        <dbReference type="SAM" id="MobiDB-lite"/>
    </source>
</evidence>
<evidence type="ECO:0000269" key="6">
    <source>
    </source>
</evidence>
<evidence type="ECO:0000303" key="7">
    <source>
    </source>
</evidence>
<evidence type="ECO:0000303" key="8">
    <source>
    </source>
</evidence>
<evidence type="ECO:0000305" key="9"/>